<accession>P81381</accession>
<accession>Q6DN62</accession>
<proteinExistence type="inferred from homology"/>
<name>CYB_KLULA</name>
<comment type="function">
    <text evidence="3">Component of the ubiquinol-cytochrome c reductase complex (complex III or cytochrome b-c1 complex) that is part of the mitochondrial respiratory chain. The b-c1 complex mediates electron transfer from ubiquinol to cytochrome c. Contributes to the generation of a proton gradient across the mitochondrial membrane that is then used for ATP synthesis.</text>
</comment>
<comment type="cofactor">
    <cofactor evidence="3">
        <name>heme b</name>
        <dbReference type="ChEBI" id="CHEBI:60344"/>
    </cofactor>
    <text evidence="3">Binds 2 heme b groups non-covalently.</text>
</comment>
<comment type="subunit">
    <text evidence="3">Fungal cytochrome b-c1 complex contains 10 subunits; 3 respiratory subunits, 2 core proteins and 5 low-molecular weight proteins. Cytochrome b-c1 complex is a homodimer.</text>
</comment>
<comment type="subcellular location">
    <subcellularLocation>
        <location evidence="3">Mitochondrion inner membrane</location>
        <topology evidence="3">Multi-pass membrane protein</topology>
    </subcellularLocation>
</comment>
<comment type="miscellaneous">
    <text evidence="1">Heme 1 (or BL or b562) is low-potential and absorbs at about 562 nm, and heme 2 (or BH or b566) is high-potential and absorbs at about 566 nm.</text>
</comment>
<comment type="similarity">
    <text evidence="4 5">Belongs to the cytochrome b family.</text>
</comment>
<comment type="caution">
    <text evidence="3">The protein contains only eight transmembrane helices, not nine as predicted by bioinformatics tools.</text>
</comment>
<sequence>MSFRKSNIYLNLLNSYMIDSPQPSSINYWWNLGSLLGLCLVIQICTGIFLAMHYSSNIELAFSAVEHIMRDVQGGWFIRYAHANGASFFFICMYIHIGKGLYYGSYRAPRTLVWNVGVIIFVLTMAAAFLGYCCVYGQMSHWGATVITNLFSAIPFIGNDIVSWLWGGFSVSNPTIQRFFAFHYLVPFIIAAFVIMHFMALHTHGSSNPLGVTGNLDRLPMHGYFIFKDLITVFVFLFFFSLFVFFSPNTMGHPDNYIPGNPLVTPASIVPEWYLLPFYAILRSVPDKLLGVLAMFGAILILLVLPITDRSVIRGNAFKVFSKFFFFLFIANFVLLGHLGECHVEPPFVVMGQIATVIYFAYFLVIVPVVSTIENVLFYVGRKNAK</sequence>
<feature type="chain" id="PRO_0000061745" description="Cytochrome b">
    <location>
        <begin position="1"/>
        <end position="386"/>
    </location>
</feature>
<feature type="transmembrane region" description="Helical" evidence="3">
    <location>
        <begin position="32"/>
        <end position="52"/>
    </location>
</feature>
<feature type="transmembrane region" description="Helical" evidence="3">
    <location>
        <begin position="76"/>
        <end position="98"/>
    </location>
</feature>
<feature type="transmembrane region" description="Helical" evidence="3">
    <location>
        <begin position="113"/>
        <end position="133"/>
    </location>
</feature>
<feature type="transmembrane region" description="Helical" evidence="3">
    <location>
        <begin position="179"/>
        <end position="199"/>
    </location>
</feature>
<feature type="transmembrane region" description="Helical" evidence="3">
    <location>
        <begin position="225"/>
        <end position="245"/>
    </location>
</feature>
<feature type="transmembrane region" description="Helical" evidence="3">
    <location>
        <begin position="289"/>
        <end position="309"/>
    </location>
</feature>
<feature type="transmembrane region" description="Helical" evidence="3">
    <location>
        <begin position="321"/>
        <end position="341"/>
    </location>
</feature>
<feature type="transmembrane region" description="Helical" evidence="3">
    <location>
        <begin position="348"/>
        <end position="368"/>
    </location>
</feature>
<feature type="binding site" description="axial binding residue" evidence="5">
    <location>
        <position position="82"/>
    </location>
    <ligand>
        <name>heme b</name>
        <dbReference type="ChEBI" id="CHEBI:60344"/>
        <label>b562</label>
    </ligand>
    <ligandPart>
        <name>Fe</name>
        <dbReference type="ChEBI" id="CHEBI:18248"/>
    </ligandPart>
</feature>
<feature type="binding site" description="axial binding residue" evidence="5">
    <location>
        <position position="96"/>
    </location>
    <ligand>
        <name>heme b</name>
        <dbReference type="ChEBI" id="CHEBI:60344"/>
        <label>b566</label>
    </ligand>
    <ligandPart>
        <name>Fe</name>
        <dbReference type="ChEBI" id="CHEBI:18248"/>
    </ligandPart>
</feature>
<feature type="binding site" description="axial binding residue" evidence="5">
    <location>
        <position position="183"/>
    </location>
    <ligand>
        <name>heme b</name>
        <dbReference type="ChEBI" id="CHEBI:60344"/>
        <label>b562</label>
    </ligand>
    <ligandPart>
        <name>Fe</name>
        <dbReference type="ChEBI" id="CHEBI:18248"/>
    </ligandPart>
</feature>
<feature type="binding site" description="axial binding residue" evidence="5">
    <location>
        <position position="197"/>
    </location>
    <ligand>
        <name>heme b</name>
        <dbReference type="ChEBI" id="CHEBI:60344"/>
        <label>b566</label>
    </ligand>
    <ligandPart>
        <name>Fe</name>
        <dbReference type="ChEBI" id="CHEBI:18248"/>
    </ligandPart>
</feature>
<feature type="binding site" evidence="2">
    <location>
        <position position="202"/>
    </location>
    <ligand>
        <name>a ubiquinone</name>
        <dbReference type="ChEBI" id="CHEBI:16389"/>
    </ligand>
</feature>
<feature type="sequence conflict" description="In Ref. 1; no nucleotide entry." evidence="6" ref="1">
    <original>A</original>
    <variation>T</variation>
    <location>
        <position position="385"/>
    </location>
</feature>
<dbReference type="EMBL" id="AY654900">
    <property type="protein sequence ID" value="AAT64950.1"/>
    <property type="molecule type" value="Genomic_DNA"/>
</dbReference>
<dbReference type="PIR" id="S12352">
    <property type="entry name" value="S12352"/>
</dbReference>
<dbReference type="RefSeq" id="YP_054497.1">
    <property type="nucleotide sequence ID" value="NC_006077.1"/>
</dbReference>
<dbReference type="SMR" id="P81381"/>
<dbReference type="FunCoup" id="P81381">
    <property type="interactions" value="667"/>
</dbReference>
<dbReference type="STRING" id="284590.P81381"/>
<dbReference type="PaxDb" id="284590-P81381"/>
<dbReference type="GeneID" id="2914051"/>
<dbReference type="KEGG" id="kla:KllafMp02"/>
<dbReference type="InParanoid" id="P81381"/>
<dbReference type="GO" id="GO:0005743">
    <property type="term" value="C:mitochondrial inner membrane"/>
    <property type="evidence" value="ECO:0007669"/>
    <property type="project" value="UniProtKB-SubCell"/>
</dbReference>
<dbReference type="GO" id="GO:0045275">
    <property type="term" value="C:respiratory chain complex III"/>
    <property type="evidence" value="ECO:0007669"/>
    <property type="project" value="InterPro"/>
</dbReference>
<dbReference type="GO" id="GO:0046872">
    <property type="term" value="F:metal ion binding"/>
    <property type="evidence" value="ECO:0007669"/>
    <property type="project" value="UniProtKB-KW"/>
</dbReference>
<dbReference type="GO" id="GO:0008121">
    <property type="term" value="F:ubiquinol-cytochrome-c reductase activity"/>
    <property type="evidence" value="ECO:0007669"/>
    <property type="project" value="InterPro"/>
</dbReference>
<dbReference type="GO" id="GO:0006122">
    <property type="term" value="P:mitochondrial electron transport, ubiquinol to cytochrome c"/>
    <property type="evidence" value="ECO:0007669"/>
    <property type="project" value="TreeGrafter"/>
</dbReference>
<dbReference type="CDD" id="cd00290">
    <property type="entry name" value="cytochrome_b_C"/>
    <property type="match status" value="1"/>
</dbReference>
<dbReference type="CDD" id="cd00284">
    <property type="entry name" value="Cytochrome_b_N"/>
    <property type="match status" value="1"/>
</dbReference>
<dbReference type="FunFam" id="1.20.810.10:FF:000002">
    <property type="entry name" value="Cytochrome b"/>
    <property type="match status" value="1"/>
</dbReference>
<dbReference type="Gene3D" id="1.20.810.10">
    <property type="entry name" value="Cytochrome Bc1 Complex, Chain C"/>
    <property type="match status" value="1"/>
</dbReference>
<dbReference type="InterPro" id="IPR005798">
    <property type="entry name" value="Cyt_b/b6_C"/>
</dbReference>
<dbReference type="InterPro" id="IPR036150">
    <property type="entry name" value="Cyt_b/b6_C_sf"/>
</dbReference>
<dbReference type="InterPro" id="IPR005797">
    <property type="entry name" value="Cyt_b/b6_N"/>
</dbReference>
<dbReference type="InterPro" id="IPR027387">
    <property type="entry name" value="Cytb/b6-like_sf"/>
</dbReference>
<dbReference type="InterPro" id="IPR030689">
    <property type="entry name" value="Cytochrome_b"/>
</dbReference>
<dbReference type="InterPro" id="IPR048260">
    <property type="entry name" value="Cytochrome_b_C_euk/bac"/>
</dbReference>
<dbReference type="InterPro" id="IPR048259">
    <property type="entry name" value="Cytochrome_b_N_euk/bac"/>
</dbReference>
<dbReference type="InterPro" id="IPR016174">
    <property type="entry name" value="Di-haem_cyt_TM"/>
</dbReference>
<dbReference type="PANTHER" id="PTHR19271">
    <property type="entry name" value="CYTOCHROME B"/>
    <property type="match status" value="1"/>
</dbReference>
<dbReference type="PANTHER" id="PTHR19271:SF16">
    <property type="entry name" value="CYTOCHROME B"/>
    <property type="match status" value="1"/>
</dbReference>
<dbReference type="Pfam" id="PF00032">
    <property type="entry name" value="Cytochrom_B_C"/>
    <property type="match status" value="1"/>
</dbReference>
<dbReference type="Pfam" id="PF00033">
    <property type="entry name" value="Cytochrome_B"/>
    <property type="match status" value="1"/>
</dbReference>
<dbReference type="PIRSF" id="PIRSF038885">
    <property type="entry name" value="COB"/>
    <property type="match status" value="1"/>
</dbReference>
<dbReference type="SUPFAM" id="SSF81648">
    <property type="entry name" value="a domain/subunit of cytochrome bc1 complex (Ubiquinol-cytochrome c reductase)"/>
    <property type="match status" value="1"/>
</dbReference>
<dbReference type="SUPFAM" id="SSF81342">
    <property type="entry name" value="Transmembrane di-heme cytochromes"/>
    <property type="match status" value="1"/>
</dbReference>
<dbReference type="PROSITE" id="PS51003">
    <property type="entry name" value="CYTB_CTER"/>
    <property type="match status" value="1"/>
</dbReference>
<dbReference type="PROSITE" id="PS51002">
    <property type="entry name" value="CYTB_NTER"/>
    <property type="match status" value="1"/>
</dbReference>
<reference key="1">
    <citation type="journal article" date="1989" name="Yeast">
        <title>Cloning and sequencing of the gene for apocytochrome b of the yeast Kluyveromyces lactis strains WM27 (NRRL Y-17066) and WM37 (NRRL Y-1140).</title>
        <authorList>
            <person name="Brunner A."/>
            <person name="Coria R."/>
        </authorList>
    </citation>
    <scope>NUCLEOTIDE SEQUENCE [GENOMIC DNA]</scope>
    <source>
        <strain>ATCC 8585 / CBS 2359 / DSM 70799 / NBRC 1267 / NRRL Y-1140 / WM37</strain>
        <strain>WM27 / NRRL Y-17066</strain>
    </source>
</reference>
<reference key="2">
    <citation type="journal article" date="2005" name="FEMS Yeast Res.">
        <title>Complete nucleotide sequence of the mitochondrial DNA from Kluyveromyces lactis.</title>
        <authorList>
            <person name="Zivanovic Y."/>
            <person name="Wincker P."/>
            <person name="Vacherie B."/>
            <person name="Bolotin-Fukuhara M."/>
            <person name="Fukuhara H."/>
        </authorList>
    </citation>
    <scope>NUCLEOTIDE SEQUENCE [LARGE SCALE GENOMIC DNA]</scope>
    <source>
        <strain>ATCC 76492 / CBS 2359/152 / CLIB 210</strain>
    </source>
</reference>
<evidence type="ECO:0000250" key="1"/>
<evidence type="ECO:0000250" key="2">
    <source>
        <dbReference type="UniProtKB" id="P00157"/>
    </source>
</evidence>
<evidence type="ECO:0000250" key="3">
    <source>
        <dbReference type="UniProtKB" id="P00163"/>
    </source>
</evidence>
<evidence type="ECO:0000255" key="4">
    <source>
        <dbReference type="PROSITE-ProRule" id="PRU00967"/>
    </source>
</evidence>
<evidence type="ECO:0000255" key="5">
    <source>
        <dbReference type="PROSITE-ProRule" id="PRU00968"/>
    </source>
</evidence>
<evidence type="ECO:0000305" key="6"/>
<keyword id="KW-0249">Electron transport</keyword>
<keyword id="KW-0349">Heme</keyword>
<keyword id="KW-0408">Iron</keyword>
<keyword id="KW-0472">Membrane</keyword>
<keyword id="KW-0479">Metal-binding</keyword>
<keyword id="KW-0496">Mitochondrion</keyword>
<keyword id="KW-0999">Mitochondrion inner membrane</keyword>
<keyword id="KW-0679">Respiratory chain</keyword>
<keyword id="KW-0812">Transmembrane</keyword>
<keyword id="KW-1133">Transmembrane helix</keyword>
<keyword id="KW-0813">Transport</keyword>
<keyword id="KW-0830">Ubiquinone</keyword>
<organism>
    <name type="scientific">Kluyveromyces lactis (strain ATCC 8585 / CBS 2359 / DSM 70799 / NBRC 1267 / NRRL Y-1140 / WM37)</name>
    <name type="common">Yeast</name>
    <name type="synonym">Candida sphaerica</name>
    <dbReference type="NCBI Taxonomy" id="284590"/>
    <lineage>
        <taxon>Eukaryota</taxon>
        <taxon>Fungi</taxon>
        <taxon>Dikarya</taxon>
        <taxon>Ascomycota</taxon>
        <taxon>Saccharomycotina</taxon>
        <taxon>Saccharomycetes</taxon>
        <taxon>Saccharomycetales</taxon>
        <taxon>Saccharomycetaceae</taxon>
        <taxon>Kluyveromyces</taxon>
    </lineage>
</organism>
<protein>
    <recommendedName>
        <fullName>Cytochrome b</fullName>
    </recommendedName>
    <alternativeName>
        <fullName>Complex III subunit 3</fullName>
    </alternativeName>
    <alternativeName>
        <fullName>Complex III subunit III</fullName>
    </alternativeName>
    <alternativeName>
        <fullName>Cytochrome b-c1 complex subunit 3</fullName>
    </alternativeName>
    <alternativeName>
        <fullName>Ubiquinol-cytochrome-c reductase complex cytochrome b subunit</fullName>
    </alternativeName>
</protein>
<gene>
    <name type="primary">COB</name>
    <name type="synonym">CYTB</name>
</gene>
<geneLocation type="mitochondrion"/>